<gene>
    <name evidence="7" type="primary">pheP</name>
    <name type="ordered locus">b0576</name>
    <name type="ordered locus">JW0565</name>
</gene>
<keyword id="KW-0029">Amino-acid transport</keyword>
<keyword id="KW-0997">Cell inner membrane</keyword>
<keyword id="KW-1003">Cell membrane</keyword>
<keyword id="KW-0472">Membrane</keyword>
<keyword id="KW-1185">Reference proteome</keyword>
<keyword id="KW-0812">Transmembrane</keyword>
<keyword id="KW-1133">Transmembrane helix</keyword>
<keyword id="KW-0813">Transport</keyword>
<proteinExistence type="evidence at protein level"/>
<name>PHEP_ECOLI</name>
<protein>
    <recommendedName>
        <fullName>Phenylalanine-specific permease</fullName>
    </recommendedName>
    <alternativeName>
        <fullName evidence="8">Phenylalanine:H(+) symporter PheP</fullName>
    </alternativeName>
</protein>
<accession>P24207</accession>
<accession>P77090</accession>
<comment type="function">
    <text evidence="1 3 4 6">Permease that is involved in the active transport across the cytoplasmic membrane of phenylalanine (PubMed:10735864, PubMed:1711024, PubMed:8226700, PubMed:9791098). Can also transport tyrosine, but not tryptophan (PubMed:10735864).</text>
</comment>
<comment type="catalytic activity">
    <reaction evidence="9 10 11">
        <text>L-phenylalanine(in) + H(+)(in) = L-phenylalanine(out) + H(+)(out)</text>
        <dbReference type="Rhea" id="RHEA:28923"/>
        <dbReference type="ChEBI" id="CHEBI:15378"/>
        <dbReference type="ChEBI" id="CHEBI:58095"/>
    </reaction>
    <physiologicalReaction direction="right-to-left" evidence="9 10 11">
        <dbReference type="Rhea" id="RHEA:28925"/>
    </physiologicalReaction>
</comment>
<comment type="subcellular location">
    <subcellularLocation>
        <location evidence="2 5 6">Cell inner membrane</location>
        <topology evidence="5">Multi-pass membrane protein</topology>
    </subcellularLocation>
</comment>
<comment type="similarity">
    <text evidence="8">Belongs to the amino acid-polyamine-organocation (APC) superfamily. Amino acid transporter (AAT) (TC 2.A.3.1) family.</text>
</comment>
<comment type="sequence caution" evidence="8">
    <conflict type="erroneous initiation">
        <sequence resource="EMBL-CDS" id="AAB40774"/>
    </conflict>
    <text>Extended N-terminus.</text>
</comment>
<evidence type="ECO:0000269" key="1">
    <source>
    </source>
</evidence>
<evidence type="ECO:0000269" key="2">
    <source>
    </source>
</evidence>
<evidence type="ECO:0000269" key="3">
    <source>
    </source>
</evidence>
<evidence type="ECO:0000269" key="4">
    <source>
    </source>
</evidence>
<evidence type="ECO:0000269" key="5">
    <source>
    </source>
</evidence>
<evidence type="ECO:0000269" key="6">
    <source>
    </source>
</evidence>
<evidence type="ECO:0000303" key="7">
    <source>
    </source>
</evidence>
<evidence type="ECO:0000305" key="8"/>
<evidence type="ECO:0000305" key="9">
    <source>
    </source>
</evidence>
<evidence type="ECO:0000305" key="10">
    <source>
    </source>
</evidence>
<evidence type="ECO:0000305" key="11">
    <source>
    </source>
</evidence>
<evidence type="ECO:0000305" key="12">
    <source>
    </source>
</evidence>
<sequence>MKNASTVSEDTASNQEPTLHRGLHNRHIQLIALGGAIGTGLFLGIGPAIQMAGPAVLLGYGVAGIIAFLIMRQLGEMVVEEPVSGSFAHFAYKYWGPFAGFLSGWNYWVMFVLVGMAELTAAGIYMQYWFPDVPTWIWAAAFFIIINAVNLVNVRLYGETEFWFALIKVLAIIGMIGFGLWLLFSGHGGEKASIDNLWRYGGFFATGWNGLILSLAVIMFSFGGLELIGITAAEARDPEKSIPKAVNQVVYRILLFYIGSLVVLLALYPWVEVKSNSSPFVMIFHNLDSNVVASALNFVILVASLSVYNSGVYSNSRMLFGLSVQGNAPKFLTRVSRRGVPINSLMLSGAITSLVVLINYLLPQKAFGLLMALVVATLLLNWIMICLAHLRFRAAMRRQGRETQFKALLYPFGNYLCIAFLGMILLLMCTMDDMRLSAILLPVWIVFLFMAFKTLRRK</sequence>
<feature type="chain" id="PRO_0000054206" description="Phenylalanine-specific permease">
    <location>
        <begin position="1"/>
        <end position="458"/>
    </location>
</feature>
<feature type="topological domain" description="Cytoplasmic" evidence="5">
    <location>
        <begin position="1"/>
        <end position="27"/>
    </location>
</feature>
<feature type="transmembrane region" description="Helical; Name=I" evidence="12">
    <location>
        <begin position="28"/>
        <end position="48"/>
    </location>
</feature>
<feature type="topological domain" description="Periplasmic" evidence="5">
    <location>
        <begin position="49"/>
        <end position="50"/>
    </location>
</feature>
<feature type="transmembrane region" description="Helical; Name=II" evidence="12">
    <location>
        <begin position="51"/>
        <end position="71"/>
    </location>
</feature>
<feature type="topological domain" description="Cytoplasmic" evidence="5">
    <location>
        <begin position="72"/>
        <end position="105"/>
    </location>
</feature>
<feature type="transmembrane region" description="Helical; Name=III" evidence="12">
    <location>
        <begin position="106"/>
        <end position="126"/>
    </location>
</feature>
<feature type="topological domain" description="Periplasmic" evidence="5">
    <location>
        <begin position="127"/>
        <end position="132"/>
    </location>
</feature>
<feature type="transmembrane region" description="Helical; Name=IV" evidence="12">
    <location>
        <begin position="133"/>
        <end position="153"/>
    </location>
</feature>
<feature type="topological domain" description="Cytoplasmic" evidence="5">
    <location>
        <begin position="154"/>
        <end position="160"/>
    </location>
</feature>
<feature type="transmembrane region" description="Helical; Name=V" evidence="12">
    <location>
        <begin position="161"/>
        <end position="181"/>
    </location>
</feature>
<feature type="topological domain" description="Periplasmic" evidence="5">
    <location>
        <begin position="182"/>
        <end position="196"/>
    </location>
</feature>
<feature type="transmembrane region" description="Helical; Name=VI" evidence="12">
    <location>
        <begin position="197"/>
        <end position="217"/>
    </location>
</feature>
<feature type="topological domain" description="Cytoplasmic" evidence="5">
    <location>
        <begin position="218"/>
        <end position="250"/>
    </location>
</feature>
<feature type="transmembrane region" description="Helical; Name=VII" evidence="12">
    <location>
        <begin position="251"/>
        <end position="271"/>
    </location>
</feature>
<feature type="topological domain" description="Periplasmic" evidence="5">
    <location>
        <begin position="272"/>
        <end position="288"/>
    </location>
</feature>
<feature type="transmembrane region" description="Helical; Name=VIII" evidence="12">
    <location>
        <begin position="289"/>
        <end position="309"/>
    </location>
</feature>
<feature type="topological domain" description="Cytoplasmic" evidence="5">
    <location>
        <begin position="310"/>
        <end position="341"/>
    </location>
</feature>
<feature type="transmembrane region" description="Helical; Name=IX" evidence="12">
    <location>
        <begin position="342"/>
        <end position="362"/>
    </location>
</feature>
<feature type="topological domain" description="Periplasmic" evidence="5">
    <location>
        <begin position="363"/>
        <end position="367"/>
    </location>
</feature>
<feature type="transmembrane region" description="Helical; Name=X" evidence="12">
    <location>
        <begin position="368"/>
        <end position="388"/>
    </location>
</feature>
<feature type="topological domain" description="Cytoplasmic" evidence="5">
    <location>
        <begin position="389"/>
        <end position="411"/>
    </location>
</feature>
<feature type="transmembrane region" description="Helical; Name=XI" evidence="12">
    <location>
        <begin position="412"/>
        <end position="432"/>
    </location>
</feature>
<feature type="topological domain" description="Periplasmic" evidence="5">
    <location>
        <begin position="433"/>
        <end position="434"/>
    </location>
</feature>
<feature type="transmembrane region" description="Helical; Name=XII" evidence="12">
    <location>
        <begin position="435"/>
        <end position="455"/>
    </location>
</feature>
<feature type="topological domain" description="Cytoplasmic" evidence="2 5">
    <location>
        <begin position="456"/>
        <end position="458"/>
    </location>
</feature>
<feature type="mutagenesis site" description="Strong decrease in phenylalanine transport activity." evidence="4">
    <original>R</original>
    <variation>G</variation>
    <variation>S</variation>
    <variation>Q</variation>
    <location>
        <position position="26"/>
    </location>
</feature>
<feature type="mutagenesis site" description="50% of wild-type phenylalanine transport activity." evidence="6">
    <original>P</original>
    <variation>A</variation>
    <location>
        <position position="54"/>
    </location>
</feature>
<feature type="mutagenesis site" description="No change in phenylalanine transport activity." evidence="6">
    <original>P</original>
    <variation>G</variation>
    <location>
        <position position="54"/>
    </location>
</feature>
<feature type="mutagenesis site" description="26% of wild-type phenylalanine transport activity." evidence="6">
    <original>P</original>
    <variation>L</variation>
    <location>
        <position position="54"/>
    </location>
</feature>
<feature type="mutagenesis site" description="No effect on phenylalanine transport activity." evidence="4">
    <original>F</original>
    <variation>L</variation>
    <location>
        <position position="87"/>
    </location>
</feature>
<feature type="mutagenesis site" description="65% of wild-type phenylalanine transport activity." evidence="4">
    <original>F</original>
    <variation>L</variation>
    <location>
        <position position="90"/>
    </location>
</feature>
<feature type="mutagenesis site" description="41% of wild-type phenylalanine transport activity." evidence="4">
    <original>Y</original>
    <variation>L</variation>
    <location>
        <position position="92"/>
    </location>
</feature>
<feature type="mutagenesis site" description="69% of wild-type phenylalanine transport activity." evidence="4">
    <original>Y</original>
    <variation>L</variation>
    <location>
        <position position="94"/>
    </location>
</feature>
<feature type="mutagenesis site" description="10% of wild-type phenylalanine transport activity." evidence="4">
    <original>W</original>
    <variation>L</variation>
    <location>
        <position position="95"/>
    </location>
</feature>
<feature type="mutagenesis site" description="No effect on phenylalanine transport activity." evidence="4">
    <original>F</original>
    <variation>L</variation>
    <location>
        <position position="98"/>
    </location>
</feature>
<feature type="mutagenesis site" description="38% of wild-type phenylalanine transport activity." evidence="4">
    <original>F</original>
    <variation>L</variation>
    <location>
        <position position="101"/>
    </location>
</feature>
<feature type="mutagenesis site" description="39% of wild-type phenylalanine transport activity." evidence="4">
    <original>W</original>
    <variation>L</variation>
    <location>
        <position position="105"/>
    </location>
</feature>
<feature type="mutagenesis site" description="No effect on phenylalanine transport activity." evidence="4">
    <original>Y</original>
    <variation>L</variation>
    <location>
        <position position="107"/>
    </location>
</feature>
<feature type="mutagenesis site" description="71% of wild-type phenylalanine transport activity." evidence="4">
    <original>W</original>
    <variation>L</variation>
    <location>
        <position position="108"/>
    </location>
</feature>
<feature type="mutagenesis site" description="60% of wild-type phenylalanine transport activity." evidence="4">
    <original>F</original>
    <variation>L</variation>
    <location>
        <position position="111"/>
    </location>
</feature>
<feature type="mutagenesis site" description="Enables the transport of tryptophan to almost the same steady-state level as that of phenylalanine." evidence="1">
    <original>F</original>
    <variation>Y</variation>
    <location>
        <position position="111"/>
    </location>
</feature>
<feature type="mutagenesis site" description="Loss of activity." evidence="4">
    <original>E</original>
    <variation>G</variation>
    <variation>L</variation>
    <variation>V</variation>
    <variation>N</variation>
    <location>
        <position position="118"/>
    </location>
</feature>
<feature type="mutagenesis site" description="Strong decrease in phenylalanine transport activity." evidence="4">
    <original>K</original>
    <variation>L</variation>
    <variation>R</variation>
    <location>
        <position position="168"/>
    </location>
</feature>
<feature type="mutagenesis site" description="Loss of activity." evidence="4">
    <original>K</original>
    <variation>N</variation>
    <location>
        <position position="168"/>
    </location>
</feature>
<feature type="mutagenesis site" description="Loss of activity." evidence="4">
    <original>E</original>
    <variation>A</variation>
    <variation>Q</variation>
    <variation>K</variation>
    <variation>R</variation>
    <variation>W</variation>
    <location>
        <position position="226"/>
    </location>
</feature>
<feature type="mutagenesis site" description="Loss of activity." evidence="4">
    <original>R</original>
    <variation>D</variation>
    <variation>E</variation>
    <variation>F</variation>
    <variation>W</variation>
    <variation>P</variation>
    <location>
        <position position="252"/>
    </location>
</feature>
<feature type="mutagenesis site" description="5% of wild-type phenylalanine transport activity." evidence="6">
    <original>P</original>
    <variation>A</variation>
    <location>
        <position position="341"/>
    </location>
</feature>
<feature type="mutagenesis site" description="Loss of activity." evidence="6">
    <original>P</original>
    <variation>G</variation>
    <variation>Q</variation>
    <variation>K</variation>
    <variation>R</variation>
    <location>
        <position position="341"/>
    </location>
</feature>
<feature type="mutagenesis site" description="3% of wild-type phenylalanine transport activity." evidence="6">
    <original>P</original>
    <variation>S</variation>
    <location>
        <position position="341"/>
    </location>
</feature>
<feature type="mutagenesis site" description="17% of wild-type phenylalanine transport activity." evidence="6">
    <original>P</original>
    <variation>T</variation>
    <location>
        <position position="341"/>
    </location>
</feature>
<feature type="mutagenesis site" description="46% of wild-type phenylalanine transport activity." evidence="6">
    <original>P</original>
    <variation>A</variation>
    <location>
        <position position="442"/>
    </location>
</feature>
<feature type="mutagenesis site" description="52% of wild-type phenylalanine transport activity." evidence="6">
    <original>P</original>
    <variation>G</variation>
    <location>
        <position position="442"/>
    </location>
</feature>
<feature type="mutagenesis site" description="43% of wild-type phenylalanine transport activity." evidence="6">
    <original>P</original>
    <variation>L</variation>
    <location>
        <position position="442"/>
    </location>
</feature>
<dbReference type="EMBL" id="M58000">
    <property type="protein sequence ID" value="AAA24334.1"/>
    <property type="molecule type" value="Genomic_DNA"/>
</dbReference>
<dbReference type="EMBL" id="U82598">
    <property type="protein sequence ID" value="AAB40774.1"/>
    <property type="status" value="ALT_INIT"/>
    <property type="molecule type" value="Genomic_DNA"/>
</dbReference>
<dbReference type="EMBL" id="U00096">
    <property type="protein sequence ID" value="AAC73677.1"/>
    <property type="molecule type" value="Genomic_DNA"/>
</dbReference>
<dbReference type="EMBL" id="AP009048">
    <property type="protein sequence ID" value="BAA35216.1"/>
    <property type="molecule type" value="Genomic_DNA"/>
</dbReference>
<dbReference type="PIR" id="A39431">
    <property type="entry name" value="A39431"/>
</dbReference>
<dbReference type="RefSeq" id="NP_415108.1">
    <property type="nucleotide sequence ID" value="NC_000913.3"/>
</dbReference>
<dbReference type="RefSeq" id="WP_000786319.1">
    <property type="nucleotide sequence ID" value="NZ_SSZK01000024.1"/>
</dbReference>
<dbReference type="SMR" id="P24207"/>
<dbReference type="BioGRID" id="4259879">
    <property type="interactions" value="7"/>
</dbReference>
<dbReference type="DIP" id="DIP-10479N"/>
<dbReference type="FunCoup" id="P24207">
    <property type="interactions" value="44"/>
</dbReference>
<dbReference type="IntAct" id="P24207">
    <property type="interactions" value="2"/>
</dbReference>
<dbReference type="STRING" id="511145.b0576"/>
<dbReference type="TCDB" id="2.A.3.1.1">
    <property type="family name" value="the amino acid-polyamine-organocation (apc) family"/>
</dbReference>
<dbReference type="PaxDb" id="511145-b0576"/>
<dbReference type="EnsemblBacteria" id="AAC73677">
    <property type="protein sequence ID" value="AAC73677"/>
    <property type="gene ID" value="b0576"/>
</dbReference>
<dbReference type="GeneID" id="945199"/>
<dbReference type="KEGG" id="ecj:JW0565"/>
<dbReference type="KEGG" id="eco:b0576"/>
<dbReference type="KEGG" id="ecoc:C3026_02860"/>
<dbReference type="PATRIC" id="fig|1411691.4.peg.1698"/>
<dbReference type="EchoBASE" id="EB0702"/>
<dbReference type="eggNOG" id="COG1113">
    <property type="taxonomic scope" value="Bacteria"/>
</dbReference>
<dbReference type="HOGENOM" id="CLU_007946_9_3_6"/>
<dbReference type="InParanoid" id="P24207"/>
<dbReference type="OMA" id="AWCQKVM"/>
<dbReference type="OrthoDB" id="5297508at2"/>
<dbReference type="PhylomeDB" id="P24207"/>
<dbReference type="BioCyc" id="EcoCyc:PHEP-MONOMER"/>
<dbReference type="BioCyc" id="MetaCyc:PHEP-MONOMER"/>
<dbReference type="PRO" id="PR:P24207"/>
<dbReference type="Proteomes" id="UP000000625">
    <property type="component" value="Chromosome"/>
</dbReference>
<dbReference type="GO" id="GO:0005886">
    <property type="term" value="C:plasma membrane"/>
    <property type="evidence" value="ECO:0000314"/>
    <property type="project" value="EcoCyc"/>
</dbReference>
<dbReference type="GO" id="GO:0006865">
    <property type="term" value="P:amino acid transport"/>
    <property type="evidence" value="ECO:0007669"/>
    <property type="project" value="UniProtKB-KW"/>
</dbReference>
<dbReference type="GO" id="GO:0015823">
    <property type="term" value="P:phenylalanine transport"/>
    <property type="evidence" value="ECO:0000269"/>
    <property type="project" value="EcoCyc"/>
</dbReference>
<dbReference type="GO" id="GO:0055085">
    <property type="term" value="P:transmembrane transport"/>
    <property type="evidence" value="ECO:0007669"/>
    <property type="project" value="InterPro"/>
</dbReference>
<dbReference type="FunFam" id="1.20.1740.10:FF:000001">
    <property type="entry name" value="Amino acid permease"/>
    <property type="match status" value="1"/>
</dbReference>
<dbReference type="Gene3D" id="1.20.1740.10">
    <property type="entry name" value="Amino acid/polyamine transporter I"/>
    <property type="match status" value="1"/>
</dbReference>
<dbReference type="InterPro" id="IPR004841">
    <property type="entry name" value="AA-permease/SLC12A_dom"/>
</dbReference>
<dbReference type="InterPro" id="IPR004840">
    <property type="entry name" value="Amino_acid_permease_CS"/>
</dbReference>
<dbReference type="NCBIfam" id="NF007602">
    <property type="entry name" value="PRK10249.1"/>
    <property type="match status" value="1"/>
</dbReference>
<dbReference type="PANTHER" id="PTHR43495">
    <property type="entry name" value="GABA PERMEASE"/>
    <property type="match status" value="1"/>
</dbReference>
<dbReference type="PANTHER" id="PTHR43495:SF3">
    <property type="entry name" value="PHENYLALANINE-SPECIFIC PERMEASE"/>
    <property type="match status" value="1"/>
</dbReference>
<dbReference type="Pfam" id="PF00324">
    <property type="entry name" value="AA_permease"/>
    <property type="match status" value="1"/>
</dbReference>
<dbReference type="PIRSF" id="PIRSF006060">
    <property type="entry name" value="AA_transporter"/>
    <property type="match status" value="1"/>
</dbReference>
<dbReference type="PROSITE" id="PS00218">
    <property type="entry name" value="AMINO_ACID_PERMEASE_1"/>
    <property type="match status" value="1"/>
</dbReference>
<reference key="1">
    <citation type="journal article" date="1991" name="J. Bacteriol.">
        <title>Cloning and sequencing of the pheP gene, which encodes the phenylalanine-specific transport system of Escherichia coli.</title>
        <authorList>
            <person name="Pi J."/>
            <person name="Wookey P.J."/>
            <person name="Pittard A.J."/>
        </authorList>
    </citation>
    <scope>NUCLEOTIDE SEQUENCE [GENOMIC DNA]</scope>
    <scope>FUNCTION</scope>
    <scope>CATALYTIC ACTIVITY</scope>
    <source>
        <strain>K12</strain>
    </source>
</reference>
<reference key="2">
    <citation type="journal article" date="1996" name="DNA Res.">
        <title>A 718-kb DNA sequence of the Escherichia coli K-12 genome corresponding to the 12.7-28.0 min region on the linkage map.</title>
        <authorList>
            <person name="Oshima T."/>
            <person name="Aiba H."/>
            <person name="Baba T."/>
            <person name="Fujita K."/>
            <person name="Hayashi K."/>
            <person name="Honjo A."/>
            <person name="Ikemoto K."/>
            <person name="Inada T."/>
            <person name="Itoh T."/>
            <person name="Kajihara M."/>
            <person name="Kanai K."/>
            <person name="Kashimoto K."/>
            <person name="Kimura S."/>
            <person name="Kitagawa M."/>
            <person name="Makino K."/>
            <person name="Masuda S."/>
            <person name="Miki T."/>
            <person name="Mizobuchi K."/>
            <person name="Mori H."/>
            <person name="Motomura K."/>
            <person name="Nakamura Y."/>
            <person name="Nashimoto H."/>
            <person name="Nishio Y."/>
            <person name="Saito N."/>
            <person name="Sampei G."/>
            <person name="Seki Y."/>
            <person name="Tagami H."/>
            <person name="Takemoto K."/>
            <person name="Wada C."/>
            <person name="Yamamoto Y."/>
            <person name="Yano M."/>
            <person name="Horiuchi T."/>
        </authorList>
    </citation>
    <scope>NUCLEOTIDE SEQUENCE [LARGE SCALE GENOMIC DNA]</scope>
    <source>
        <strain>K12 / W3110 / ATCC 27325 / DSM 5911</strain>
    </source>
</reference>
<reference key="3">
    <citation type="submission" date="1997-01" db="EMBL/GenBank/DDBJ databases">
        <title>Sequence of minutes 4-25 of Escherichia coli.</title>
        <authorList>
            <person name="Chung E."/>
            <person name="Allen E."/>
            <person name="Araujo R."/>
            <person name="Aparicio A.M."/>
            <person name="Davis K."/>
            <person name="Duncan M."/>
            <person name="Federspiel N."/>
            <person name="Hyman R."/>
            <person name="Kalman S."/>
            <person name="Komp C."/>
            <person name="Kurdi O."/>
            <person name="Lew H."/>
            <person name="Lin D."/>
            <person name="Namath A."/>
            <person name="Oefner P."/>
            <person name="Roberts D."/>
            <person name="Schramm S."/>
            <person name="Davis R.W."/>
        </authorList>
    </citation>
    <scope>NUCLEOTIDE SEQUENCE [LARGE SCALE GENOMIC DNA]</scope>
    <source>
        <strain>K12 / MG1655 / ATCC 47076</strain>
    </source>
</reference>
<reference key="4">
    <citation type="journal article" date="1997" name="Science">
        <title>The complete genome sequence of Escherichia coli K-12.</title>
        <authorList>
            <person name="Blattner F.R."/>
            <person name="Plunkett G. III"/>
            <person name="Bloch C.A."/>
            <person name="Perna N.T."/>
            <person name="Burland V."/>
            <person name="Riley M."/>
            <person name="Collado-Vides J."/>
            <person name="Glasner J.D."/>
            <person name="Rode C.K."/>
            <person name="Mayhew G.F."/>
            <person name="Gregor J."/>
            <person name="Davis N.W."/>
            <person name="Kirkpatrick H.A."/>
            <person name="Goeden M.A."/>
            <person name="Rose D.J."/>
            <person name="Mau B."/>
            <person name="Shao Y."/>
        </authorList>
    </citation>
    <scope>NUCLEOTIDE SEQUENCE [LARGE SCALE GENOMIC DNA]</scope>
    <source>
        <strain>K12 / MG1655 / ATCC 47076</strain>
    </source>
</reference>
<reference key="5">
    <citation type="journal article" date="2006" name="Mol. Syst. Biol.">
        <title>Highly accurate genome sequences of Escherichia coli K-12 strains MG1655 and W3110.</title>
        <authorList>
            <person name="Hayashi K."/>
            <person name="Morooka N."/>
            <person name="Yamamoto Y."/>
            <person name="Fujita K."/>
            <person name="Isono K."/>
            <person name="Choi S."/>
            <person name="Ohtsubo E."/>
            <person name="Baba T."/>
            <person name="Wanner B.L."/>
            <person name="Mori H."/>
            <person name="Horiuchi T."/>
        </authorList>
    </citation>
    <scope>NUCLEOTIDE SEQUENCE [LARGE SCALE GENOMIC DNA]</scope>
    <source>
        <strain>K12 / W3110 / ATCC 27325 / DSM 5911</strain>
    </source>
</reference>
<reference key="6">
    <citation type="journal article" date="1993" name="J. Bacteriol.">
        <title>Site-directed mutagenesis reveals the importance of conserved charged residues for the transport activity of the PheP permease of Escherichia coli.</title>
        <authorList>
            <person name="Pi J."/>
            <person name="Wookey P.J."/>
            <person name="Pittard A.J."/>
        </authorList>
    </citation>
    <scope>FUNCTION</scope>
    <scope>CATALYTIC ACTIVITY</scope>
    <scope>MUTAGENESIS OF ARG-26; PHE-87; PHE-90; TYR-92; TYR-94; TRP-95; PHE-98; PHE-101; TRP-105; TYR-107; TRP-108; PHE-111; GLU-118; LYS-168; GLU-226 AND ARG-252</scope>
</reference>
<reference key="7">
    <citation type="journal article" date="1996" name="J. Bacteriol.">
        <title>Topology of the phenylalanine-specific permease of Escherichia coli.</title>
        <authorList>
            <person name="Pi J."/>
            <person name="Pittard A.J."/>
        </authorList>
    </citation>
    <scope>SUBCELLULAR LOCATION</scope>
    <scope>TOPOLOGY</scope>
</reference>
<reference key="8">
    <citation type="journal article" date="1998" name="J. Bacteriol.">
        <title>Functional consequences of changing proline residues in the phenylalanine-specific permease of Escherichia coli.</title>
        <authorList>
            <person name="Pi J."/>
            <person name="Dogovski C."/>
            <person name="Pittard A.J."/>
        </authorList>
    </citation>
    <scope>FUNCTION</scope>
    <scope>SUBCELLULAR LOCATION</scope>
    <scope>MUTAGENESIS OF PRO-54; PRO-341 AND PRO-442</scope>
    <source>
        <strain>K12</strain>
    </source>
</reference>
<reference key="9">
    <citation type="journal article" date="2000" name="J. Bacteriol.">
        <title>A study of AroP-PheP chimeric proteins and identification of a residue involved in tryptophan transport.</title>
        <authorList>
            <person name="Cosgriff A.J."/>
            <person name="Brasier G."/>
            <person name="Pi J."/>
            <person name="Dogovski C."/>
            <person name="Sarsero J.P."/>
            <person name="Pittard A.J."/>
        </authorList>
    </citation>
    <scope>FUNCTION</scope>
    <scope>CATALYTIC ACTIVITY</scope>
    <scope>MUTAGENESIS OF PHE-111</scope>
    <source>
        <strain>K12</strain>
    </source>
</reference>
<reference key="10">
    <citation type="journal article" date="2005" name="Science">
        <title>Global topology analysis of the Escherichia coli inner membrane proteome.</title>
        <authorList>
            <person name="Daley D.O."/>
            <person name="Rapp M."/>
            <person name="Granseth E."/>
            <person name="Melen K."/>
            <person name="Drew D."/>
            <person name="von Heijne G."/>
        </authorList>
    </citation>
    <scope>TOPOLOGY [LARGE SCALE ANALYSIS]</scope>
    <scope>SUBCELLULAR LOCATION</scope>
    <source>
        <strain>K12 / MG1655 / ATCC 47076</strain>
    </source>
</reference>
<organism>
    <name type="scientific">Escherichia coli (strain K12)</name>
    <dbReference type="NCBI Taxonomy" id="83333"/>
    <lineage>
        <taxon>Bacteria</taxon>
        <taxon>Pseudomonadati</taxon>
        <taxon>Pseudomonadota</taxon>
        <taxon>Gammaproteobacteria</taxon>
        <taxon>Enterobacterales</taxon>
        <taxon>Enterobacteriaceae</taxon>
        <taxon>Escherichia</taxon>
    </lineage>
</organism>